<comment type="function">
    <text evidence="1">Catalyzes the conversion of glucosamine-6-phosphate to glucosamine-1-phosphate.</text>
</comment>
<comment type="catalytic activity">
    <reaction evidence="1">
        <text>alpha-D-glucosamine 1-phosphate = D-glucosamine 6-phosphate</text>
        <dbReference type="Rhea" id="RHEA:23424"/>
        <dbReference type="ChEBI" id="CHEBI:58516"/>
        <dbReference type="ChEBI" id="CHEBI:58725"/>
        <dbReference type="EC" id="5.4.2.10"/>
    </reaction>
</comment>
<comment type="cofactor">
    <cofactor evidence="1">
        <name>Mg(2+)</name>
        <dbReference type="ChEBI" id="CHEBI:18420"/>
    </cofactor>
    <text evidence="1">Binds 1 Mg(2+) ion per subunit.</text>
</comment>
<comment type="PTM">
    <text evidence="1">Activated by phosphorylation.</text>
</comment>
<comment type="similarity">
    <text evidence="1">Belongs to the phosphohexose mutase family.</text>
</comment>
<sequence length="446" mass="47898">MSNRKYFGTDGIRGKVGESPITPDFVLKLGWAAGKVLARHGSRKIIIGKDTRISGYMLESALEAGLAAAGLSALFTGPMPTPAVAYLTRTFRAEAGIVISASHNPFYDNGIKFFSIDGTKLPDDVEEAIEAEMEKPLTCVESAELGKANRIVDAAGRYIEFCKGTFPSELSLNELKIVVDCANGATYHIAPSVLRELGATVITIGCEPDGMNINEECGATDVRLLQERVLAEGAHVGLAFDGDGDRLMMVDHLGNKVDGDQILYIIAREGLRQGQLKGGAVGTLMSNMGLQLALKDLGIPFVRAKVGDRYVLEAMQEKGWRIGAENSGHVILLDKTTTGDGIVAGLQVLTAMVRNHMSLHDLCSGMKLLPQILVNVRFSGEHNPLKSDEVEEVTRQVEKELGGRGRVLLRKSGTEPLIRVMVEGDAEESLIAEMANRIADAVKAAG</sequence>
<gene>
    <name evidence="1" type="primary">glmM</name>
    <name type="ordered locus">YPDSF_3549</name>
</gene>
<evidence type="ECO:0000255" key="1">
    <source>
        <dbReference type="HAMAP-Rule" id="MF_01554"/>
    </source>
</evidence>
<reference key="1">
    <citation type="submission" date="2007-02" db="EMBL/GenBank/DDBJ databases">
        <title>Complete sequence of chromosome of Yersinia pestis Pestoides F.</title>
        <authorList>
            <consortium name="US DOE Joint Genome Institute"/>
            <person name="Copeland A."/>
            <person name="Lucas S."/>
            <person name="Lapidus A."/>
            <person name="Barry K."/>
            <person name="Detter J.C."/>
            <person name="Glavina del Rio T."/>
            <person name="Hammon N."/>
            <person name="Israni S."/>
            <person name="Dalin E."/>
            <person name="Tice H."/>
            <person name="Pitluck S."/>
            <person name="Di Bartolo G."/>
            <person name="Chain P."/>
            <person name="Malfatti S."/>
            <person name="Shin M."/>
            <person name="Vergez L."/>
            <person name="Schmutz J."/>
            <person name="Larimer F."/>
            <person name="Land M."/>
            <person name="Hauser L."/>
            <person name="Worsham P."/>
            <person name="Chu M."/>
            <person name="Bearden S."/>
            <person name="Garcia E."/>
            <person name="Richardson P."/>
        </authorList>
    </citation>
    <scope>NUCLEOTIDE SEQUENCE [LARGE SCALE GENOMIC DNA]</scope>
    <source>
        <strain>Pestoides F</strain>
    </source>
</reference>
<accession>A4TRI7</accession>
<protein>
    <recommendedName>
        <fullName evidence="1">Phosphoglucosamine mutase</fullName>
        <ecNumber evidence="1">5.4.2.10</ecNumber>
    </recommendedName>
</protein>
<organism>
    <name type="scientific">Yersinia pestis (strain Pestoides F)</name>
    <dbReference type="NCBI Taxonomy" id="386656"/>
    <lineage>
        <taxon>Bacteria</taxon>
        <taxon>Pseudomonadati</taxon>
        <taxon>Pseudomonadota</taxon>
        <taxon>Gammaproteobacteria</taxon>
        <taxon>Enterobacterales</taxon>
        <taxon>Yersiniaceae</taxon>
        <taxon>Yersinia</taxon>
    </lineage>
</organism>
<feature type="chain" id="PRO_0000301406" description="Phosphoglucosamine mutase">
    <location>
        <begin position="1"/>
        <end position="446"/>
    </location>
</feature>
<feature type="active site" description="Phosphoserine intermediate" evidence="1">
    <location>
        <position position="102"/>
    </location>
</feature>
<feature type="binding site" description="via phosphate group" evidence="1">
    <location>
        <position position="102"/>
    </location>
    <ligand>
        <name>Mg(2+)</name>
        <dbReference type="ChEBI" id="CHEBI:18420"/>
    </ligand>
</feature>
<feature type="binding site" evidence="1">
    <location>
        <position position="241"/>
    </location>
    <ligand>
        <name>Mg(2+)</name>
        <dbReference type="ChEBI" id="CHEBI:18420"/>
    </ligand>
</feature>
<feature type="binding site" evidence="1">
    <location>
        <position position="243"/>
    </location>
    <ligand>
        <name>Mg(2+)</name>
        <dbReference type="ChEBI" id="CHEBI:18420"/>
    </ligand>
</feature>
<feature type="binding site" evidence="1">
    <location>
        <position position="245"/>
    </location>
    <ligand>
        <name>Mg(2+)</name>
        <dbReference type="ChEBI" id="CHEBI:18420"/>
    </ligand>
</feature>
<feature type="modified residue" description="Phosphoserine" evidence="1">
    <location>
        <position position="102"/>
    </location>
</feature>
<dbReference type="EC" id="5.4.2.10" evidence="1"/>
<dbReference type="EMBL" id="CP000668">
    <property type="protein sequence ID" value="ABP41899.1"/>
    <property type="molecule type" value="Genomic_DNA"/>
</dbReference>
<dbReference type="RefSeq" id="WP_002210189.1">
    <property type="nucleotide sequence ID" value="NZ_CP009715.1"/>
</dbReference>
<dbReference type="SMR" id="A4TRI7"/>
<dbReference type="GeneID" id="57975214"/>
<dbReference type="KEGG" id="ypp:YPDSF_3549"/>
<dbReference type="PATRIC" id="fig|386656.14.peg.205"/>
<dbReference type="GO" id="GO:0005829">
    <property type="term" value="C:cytosol"/>
    <property type="evidence" value="ECO:0007669"/>
    <property type="project" value="TreeGrafter"/>
</dbReference>
<dbReference type="GO" id="GO:0000287">
    <property type="term" value="F:magnesium ion binding"/>
    <property type="evidence" value="ECO:0007669"/>
    <property type="project" value="UniProtKB-UniRule"/>
</dbReference>
<dbReference type="GO" id="GO:0008966">
    <property type="term" value="F:phosphoglucosamine mutase activity"/>
    <property type="evidence" value="ECO:0007669"/>
    <property type="project" value="UniProtKB-UniRule"/>
</dbReference>
<dbReference type="GO" id="GO:0004615">
    <property type="term" value="F:phosphomannomutase activity"/>
    <property type="evidence" value="ECO:0007669"/>
    <property type="project" value="TreeGrafter"/>
</dbReference>
<dbReference type="GO" id="GO:0005975">
    <property type="term" value="P:carbohydrate metabolic process"/>
    <property type="evidence" value="ECO:0007669"/>
    <property type="project" value="InterPro"/>
</dbReference>
<dbReference type="GO" id="GO:0009252">
    <property type="term" value="P:peptidoglycan biosynthetic process"/>
    <property type="evidence" value="ECO:0007669"/>
    <property type="project" value="TreeGrafter"/>
</dbReference>
<dbReference type="GO" id="GO:0006048">
    <property type="term" value="P:UDP-N-acetylglucosamine biosynthetic process"/>
    <property type="evidence" value="ECO:0007669"/>
    <property type="project" value="TreeGrafter"/>
</dbReference>
<dbReference type="CDD" id="cd05802">
    <property type="entry name" value="GlmM"/>
    <property type="match status" value="1"/>
</dbReference>
<dbReference type="FunFam" id="3.30.310.50:FF:000001">
    <property type="entry name" value="Phosphoglucosamine mutase"/>
    <property type="match status" value="1"/>
</dbReference>
<dbReference type="FunFam" id="3.40.120.10:FF:000001">
    <property type="entry name" value="Phosphoglucosamine mutase"/>
    <property type="match status" value="1"/>
</dbReference>
<dbReference type="FunFam" id="3.40.120.10:FF:000002">
    <property type="entry name" value="Phosphoglucosamine mutase"/>
    <property type="match status" value="1"/>
</dbReference>
<dbReference type="Gene3D" id="3.40.120.10">
    <property type="entry name" value="Alpha-D-Glucose-1,6-Bisphosphate, subunit A, domain 3"/>
    <property type="match status" value="3"/>
</dbReference>
<dbReference type="Gene3D" id="3.30.310.50">
    <property type="entry name" value="Alpha-D-phosphohexomutase, C-terminal domain"/>
    <property type="match status" value="1"/>
</dbReference>
<dbReference type="HAMAP" id="MF_01554_B">
    <property type="entry name" value="GlmM_B"/>
    <property type="match status" value="1"/>
</dbReference>
<dbReference type="InterPro" id="IPR005844">
    <property type="entry name" value="A-D-PHexomutase_a/b/a-I"/>
</dbReference>
<dbReference type="InterPro" id="IPR016055">
    <property type="entry name" value="A-D-PHexomutase_a/b/a-I/II/III"/>
</dbReference>
<dbReference type="InterPro" id="IPR005845">
    <property type="entry name" value="A-D-PHexomutase_a/b/a-II"/>
</dbReference>
<dbReference type="InterPro" id="IPR005846">
    <property type="entry name" value="A-D-PHexomutase_a/b/a-III"/>
</dbReference>
<dbReference type="InterPro" id="IPR005843">
    <property type="entry name" value="A-D-PHexomutase_C"/>
</dbReference>
<dbReference type="InterPro" id="IPR036900">
    <property type="entry name" value="A-D-PHexomutase_C_sf"/>
</dbReference>
<dbReference type="InterPro" id="IPR016066">
    <property type="entry name" value="A-D-PHexomutase_CS"/>
</dbReference>
<dbReference type="InterPro" id="IPR005841">
    <property type="entry name" value="Alpha-D-phosphohexomutase_SF"/>
</dbReference>
<dbReference type="InterPro" id="IPR006352">
    <property type="entry name" value="GlmM_bact"/>
</dbReference>
<dbReference type="InterPro" id="IPR050060">
    <property type="entry name" value="Phosphoglucosamine_mutase"/>
</dbReference>
<dbReference type="NCBIfam" id="TIGR01455">
    <property type="entry name" value="glmM"/>
    <property type="match status" value="1"/>
</dbReference>
<dbReference type="NCBIfam" id="NF008139">
    <property type="entry name" value="PRK10887.1"/>
    <property type="match status" value="1"/>
</dbReference>
<dbReference type="PANTHER" id="PTHR42946:SF1">
    <property type="entry name" value="PHOSPHOGLUCOMUTASE (ALPHA-D-GLUCOSE-1,6-BISPHOSPHATE-DEPENDENT)"/>
    <property type="match status" value="1"/>
</dbReference>
<dbReference type="PANTHER" id="PTHR42946">
    <property type="entry name" value="PHOSPHOHEXOSE MUTASE"/>
    <property type="match status" value="1"/>
</dbReference>
<dbReference type="Pfam" id="PF02878">
    <property type="entry name" value="PGM_PMM_I"/>
    <property type="match status" value="1"/>
</dbReference>
<dbReference type="Pfam" id="PF02879">
    <property type="entry name" value="PGM_PMM_II"/>
    <property type="match status" value="1"/>
</dbReference>
<dbReference type="Pfam" id="PF02880">
    <property type="entry name" value="PGM_PMM_III"/>
    <property type="match status" value="1"/>
</dbReference>
<dbReference type="Pfam" id="PF00408">
    <property type="entry name" value="PGM_PMM_IV"/>
    <property type="match status" value="1"/>
</dbReference>
<dbReference type="PRINTS" id="PR00509">
    <property type="entry name" value="PGMPMM"/>
</dbReference>
<dbReference type="SUPFAM" id="SSF55957">
    <property type="entry name" value="Phosphoglucomutase, C-terminal domain"/>
    <property type="match status" value="1"/>
</dbReference>
<dbReference type="SUPFAM" id="SSF53738">
    <property type="entry name" value="Phosphoglucomutase, first 3 domains"/>
    <property type="match status" value="3"/>
</dbReference>
<dbReference type="PROSITE" id="PS00710">
    <property type="entry name" value="PGM_PMM"/>
    <property type="match status" value="1"/>
</dbReference>
<name>GLMM_YERPP</name>
<proteinExistence type="inferred from homology"/>
<keyword id="KW-0413">Isomerase</keyword>
<keyword id="KW-0460">Magnesium</keyword>
<keyword id="KW-0479">Metal-binding</keyword>
<keyword id="KW-0597">Phosphoprotein</keyword>